<reference key="1">
    <citation type="journal article" date="2000" name="Nature">
        <title>Sequence and analysis of chromosome 1 of the plant Arabidopsis thaliana.</title>
        <authorList>
            <person name="Theologis A."/>
            <person name="Ecker J.R."/>
            <person name="Palm C.J."/>
            <person name="Federspiel N.A."/>
            <person name="Kaul S."/>
            <person name="White O."/>
            <person name="Alonso J."/>
            <person name="Altafi H."/>
            <person name="Araujo R."/>
            <person name="Bowman C.L."/>
            <person name="Brooks S.Y."/>
            <person name="Buehler E."/>
            <person name="Chan A."/>
            <person name="Chao Q."/>
            <person name="Chen H."/>
            <person name="Cheuk R.F."/>
            <person name="Chin C.W."/>
            <person name="Chung M.K."/>
            <person name="Conn L."/>
            <person name="Conway A.B."/>
            <person name="Conway A.R."/>
            <person name="Creasy T.H."/>
            <person name="Dewar K."/>
            <person name="Dunn P."/>
            <person name="Etgu P."/>
            <person name="Feldblyum T.V."/>
            <person name="Feng J.-D."/>
            <person name="Fong B."/>
            <person name="Fujii C.Y."/>
            <person name="Gill J.E."/>
            <person name="Goldsmith A.D."/>
            <person name="Haas B."/>
            <person name="Hansen N.F."/>
            <person name="Hughes B."/>
            <person name="Huizar L."/>
            <person name="Hunter J.L."/>
            <person name="Jenkins J."/>
            <person name="Johnson-Hopson C."/>
            <person name="Khan S."/>
            <person name="Khaykin E."/>
            <person name="Kim C.J."/>
            <person name="Koo H.L."/>
            <person name="Kremenetskaia I."/>
            <person name="Kurtz D.B."/>
            <person name="Kwan A."/>
            <person name="Lam B."/>
            <person name="Langin-Hooper S."/>
            <person name="Lee A."/>
            <person name="Lee J.M."/>
            <person name="Lenz C.A."/>
            <person name="Li J.H."/>
            <person name="Li Y.-P."/>
            <person name="Lin X."/>
            <person name="Liu S.X."/>
            <person name="Liu Z.A."/>
            <person name="Luros J.S."/>
            <person name="Maiti R."/>
            <person name="Marziali A."/>
            <person name="Militscher J."/>
            <person name="Miranda M."/>
            <person name="Nguyen M."/>
            <person name="Nierman W.C."/>
            <person name="Osborne B.I."/>
            <person name="Pai G."/>
            <person name="Peterson J."/>
            <person name="Pham P.K."/>
            <person name="Rizzo M."/>
            <person name="Rooney T."/>
            <person name="Rowley D."/>
            <person name="Sakano H."/>
            <person name="Salzberg S.L."/>
            <person name="Schwartz J.R."/>
            <person name="Shinn P."/>
            <person name="Southwick A.M."/>
            <person name="Sun H."/>
            <person name="Tallon L.J."/>
            <person name="Tambunga G."/>
            <person name="Toriumi M.J."/>
            <person name="Town C.D."/>
            <person name="Utterback T."/>
            <person name="Van Aken S."/>
            <person name="Vaysberg M."/>
            <person name="Vysotskaia V.S."/>
            <person name="Walker M."/>
            <person name="Wu D."/>
            <person name="Yu G."/>
            <person name="Fraser C.M."/>
            <person name="Venter J.C."/>
            <person name="Davis R.W."/>
        </authorList>
    </citation>
    <scope>NUCLEOTIDE SEQUENCE [LARGE SCALE GENOMIC DNA]</scope>
    <source>
        <strain>cv. Columbia</strain>
    </source>
</reference>
<reference key="2">
    <citation type="journal article" date="2017" name="Plant J.">
        <title>Araport11: a complete reannotation of the Arabidopsis thaliana reference genome.</title>
        <authorList>
            <person name="Cheng C.Y."/>
            <person name="Krishnakumar V."/>
            <person name="Chan A.P."/>
            <person name="Thibaud-Nissen F."/>
            <person name="Schobel S."/>
            <person name="Town C.D."/>
        </authorList>
    </citation>
    <scope>GENOME REANNOTATION</scope>
    <source>
        <strain>cv. Columbia</strain>
    </source>
</reference>
<reference key="3">
    <citation type="journal article" date="2003" name="Science">
        <title>Empirical analysis of transcriptional activity in the Arabidopsis genome.</title>
        <authorList>
            <person name="Yamada K."/>
            <person name="Lim J."/>
            <person name="Dale J.M."/>
            <person name="Chen H."/>
            <person name="Shinn P."/>
            <person name="Palm C.J."/>
            <person name="Southwick A.M."/>
            <person name="Wu H.C."/>
            <person name="Kim C.J."/>
            <person name="Nguyen M."/>
            <person name="Pham P.K."/>
            <person name="Cheuk R.F."/>
            <person name="Karlin-Newmann G."/>
            <person name="Liu S.X."/>
            <person name="Lam B."/>
            <person name="Sakano H."/>
            <person name="Wu T."/>
            <person name="Yu G."/>
            <person name="Miranda M."/>
            <person name="Quach H.L."/>
            <person name="Tripp M."/>
            <person name="Chang C.H."/>
            <person name="Lee J.M."/>
            <person name="Toriumi M.J."/>
            <person name="Chan M.M."/>
            <person name="Tang C.C."/>
            <person name="Onodera C.S."/>
            <person name="Deng J.M."/>
            <person name="Akiyama K."/>
            <person name="Ansari Y."/>
            <person name="Arakawa T."/>
            <person name="Banh J."/>
            <person name="Banno F."/>
            <person name="Bowser L."/>
            <person name="Brooks S.Y."/>
            <person name="Carninci P."/>
            <person name="Chao Q."/>
            <person name="Choy N."/>
            <person name="Enju A."/>
            <person name="Goldsmith A.D."/>
            <person name="Gurjal M."/>
            <person name="Hansen N.F."/>
            <person name="Hayashizaki Y."/>
            <person name="Johnson-Hopson C."/>
            <person name="Hsuan V.W."/>
            <person name="Iida K."/>
            <person name="Karnes M."/>
            <person name="Khan S."/>
            <person name="Koesema E."/>
            <person name="Ishida J."/>
            <person name="Jiang P.X."/>
            <person name="Jones T."/>
            <person name="Kawai J."/>
            <person name="Kamiya A."/>
            <person name="Meyers C."/>
            <person name="Nakajima M."/>
            <person name="Narusaka M."/>
            <person name="Seki M."/>
            <person name="Sakurai T."/>
            <person name="Satou M."/>
            <person name="Tamse R."/>
            <person name="Vaysberg M."/>
            <person name="Wallender E.K."/>
            <person name="Wong C."/>
            <person name="Yamamura Y."/>
            <person name="Yuan S."/>
            <person name="Shinozaki K."/>
            <person name="Davis R.W."/>
            <person name="Theologis A."/>
            <person name="Ecker J.R."/>
        </authorList>
    </citation>
    <scope>NUCLEOTIDE SEQUENCE [LARGE SCALE MRNA]</scope>
    <source>
        <strain>cv. Columbia</strain>
    </source>
</reference>
<reference key="4">
    <citation type="journal article" date="2017" name="Front. Plant Sci.">
        <title>Two nucleolar proteins, GDP1 and OLI2, function as ribosome biogenesis factors and are preferentially involved in promotion of leaf cell proliferation without strongly affecting leaf adaxial-abaxial patterning in Arabidopsis thaliana.</title>
        <authorList>
            <person name="Kojima K."/>
            <person name="Tamura J."/>
            <person name="Chiba H."/>
            <person name="Fukada K."/>
            <person name="Tsukaya H."/>
            <person name="Horiguchi G."/>
        </authorList>
    </citation>
    <scope>FUNCTION</scope>
    <scope>DISRUPTION PHENOTYPE</scope>
    <scope>SUBCELLULAR LOCATION</scope>
    <scope>TISSUE SPECIFICITY</scope>
    <source>
        <strain>cv. Columbia</strain>
    </source>
</reference>
<organism>
    <name type="scientific">Arabidopsis thaliana</name>
    <name type="common">Mouse-ear cress</name>
    <dbReference type="NCBI Taxonomy" id="3702"/>
    <lineage>
        <taxon>Eukaryota</taxon>
        <taxon>Viridiplantae</taxon>
        <taxon>Streptophyta</taxon>
        <taxon>Embryophyta</taxon>
        <taxon>Tracheophyta</taxon>
        <taxon>Spermatophyta</taxon>
        <taxon>Magnoliopsida</taxon>
        <taxon>eudicotyledons</taxon>
        <taxon>Gunneridae</taxon>
        <taxon>Pentapetalae</taxon>
        <taxon>rosids</taxon>
        <taxon>malvids</taxon>
        <taxon>Brassicales</taxon>
        <taxon>Brassicaceae</taxon>
        <taxon>Camelineae</taxon>
        <taxon>Arabidopsis</taxon>
    </lineage>
</organism>
<sequence length="391" mass="43439">MAAPEAPVKYVGICKDSAAFKLMKSMGWEEGEGLGKDKQGIKGYVRVTNKQDTSGVGLDKPNPWAFDTTQFDNILKKLKVQAAPTKTSKNDDDSDKEDESEDDAVKSEPAKLKTVAKVTRPQGRYKRREKGKLVNSYSSKDLEGILVKRTEDPSPAVCDIADSMDIEIISEDQDASIKEQKIEEPSSNWWGFKSGFVSGGLLGAKSGKKKLKASERKMFSENDQENLYNMVQDKATAGKQGLGIKDRPKKIAGVRYEGKKTSFDNSDDDDDDDDDDDEEDEEEDEDESEADDDDKDSVIESSLPAKRKHDEIIEPKIKLKNLCKQIVKKDAGKGGFMKLKQLKSLIDEQAPSVLSEFSSRKDAIAYLKLKLERSGKFVVEGKKISLVSSKK</sequence>
<protein>
    <recommendedName>
        <fullName evidence="5">G-patch domain-containing protein 1</fullName>
    </recommendedName>
</protein>
<evidence type="ECO:0000255" key="1">
    <source>
        <dbReference type="PROSITE-ProRule" id="PRU00092"/>
    </source>
</evidence>
<evidence type="ECO:0000255" key="2">
    <source>
        <dbReference type="PROSITE-ProRule" id="PRU00768"/>
    </source>
</evidence>
<evidence type="ECO:0000256" key="3">
    <source>
        <dbReference type="SAM" id="MobiDB-lite"/>
    </source>
</evidence>
<evidence type="ECO:0000269" key="4">
    <source>
    </source>
</evidence>
<evidence type="ECO:0000303" key="5">
    <source>
    </source>
</evidence>
<evidence type="ECO:0000305" key="6"/>
<evidence type="ECO:0000312" key="7">
    <source>
        <dbReference type="Araport" id="AT1G63980"/>
    </source>
</evidence>
<evidence type="ECO:0000312" key="8">
    <source>
        <dbReference type="EMBL" id="AAF24571.1"/>
    </source>
</evidence>
<proteinExistence type="evidence at transcript level"/>
<gene>
    <name evidence="5" type="primary">GDP1</name>
    <name evidence="7" type="ordered locus">At1g63980</name>
    <name evidence="8" type="ORF">F22C12.25</name>
</gene>
<accession>Q940M0</accession>
<accession>Q9SH49</accession>
<dbReference type="EMBL" id="AC007764">
    <property type="protein sequence ID" value="AAF24571.1"/>
    <property type="status" value="ALT_SEQ"/>
    <property type="molecule type" value="Genomic_DNA"/>
</dbReference>
<dbReference type="EMBL" id="CP002684">
    <property type="protein sequence ID" value="AEE34176.1"/>
    <property type="molecule type" value="Genomic_DNA"/>
</dbReference>
<dbReference type="EMBL" id="AY054272">
    <property type="protein sequence ID" value="AAL06931.1"/>
    <property type="molecule type" value="mRNA"/>
</dbReference>
<dbReference type="EMBL" id="BT002689">
    <property type="protein sequence ID" value="AAO11605.1"/>
    <property type="molecule type" value="mRNA"/>
</dbReference>
<dbReference type="RefSeq" id="NP_564820.1">
    <property type="nucleotide sequence ID" value="NM_105071.4"/>
</dbReference>
<dbReference type="SMR" id="Q940M0"/>
<dbReference type="FunCoup" id="Q940M0">
    <property type="interactions" value="483"/>
</dbReference>
<dbReference type="STRING" id="3702.Q940M0"/>
<dbReference type="iPTMnet" id="Q940M0"/>
<dbReference type="PaxDb" id="3702-AT1G63980.1"/>
<dbReference type="ProteomicsDB" id="185442"/>
<dbReference type="EnsemblPlants" id="AT1G63980.1">
    <property type="protein sequence ID" value="AT1G63980.1"/>
    <property type="gene ID" value="AT1G63980"/>
</dbReference>
<dbReference type="GeneID" id="842701"/>
<dbReference type="Gramene" id="AT1G63980.1">
    <property type="protein sequence ID" value="AT1G63980.1"/>
    <property type="gene ID" value="AT1G63980"/>
</dbReference>
<dbReference type="KEGG" id="ath:AT1G63980"/>
<dbReference type="Araport" id="AT1G63980"/>
<dbReference type="TAIR" id="AT1G63980"/>
<dbReference type="eggNOG" id="KOG2809">
    <property type="taxonomic scope" value="Eukaryota"/>
</dbReference>
<dbReference type="InParanoid" id="Q940M0"/>
<dbReference type="PhylomeDB" id="Q940M0"/>
<dbReference type="PRO" id="PR:Q940M0"/>
<dbReference type="Proteomes" id="UP000006548">
    <property type="component" value="Chromosome 1"/>
</dbReference>
<dbReference type="ExpressionAtlas" id="Q940M0">
    <property type="expression patterns" value="baseline and differential"/>
</dbReference>
<dbReference type="GO" id="GO:0005730">
    <property type="term" value="C:nucleolus"/>
    <property type="evidence" value="ECO:0000314"/>
    <property type="project" value="UniProtKB"/>
</dbReference>
<dbReference type="GO" id="GO:0003676">
    <property type="term" value="F:nucleic acid binding"/>
    <property type="evidence" value="ECO:0007669"/>
    <property type="project" value="InterPro"/>
</dbReference>
<dbReference type="GO" id="GO:0042127">
    <property type="term" value="P:regulation of cell population proliferation"/>
    <property type="evidence" value="ECO:0000315"/>
    <property type="project" value="UniProtKB"/>
</dbReference>
<dbReference type="GO" id="GO:0090069">
    <property type="term" value="P:regulation of ribosome biogenesis"/>
    <property type="evidence" value="ECO:0000315"/>
    <property type="project" value="UniProtKB"/>
</dbReference>
<dbReference type="GO" id="GO:0006364">
    <property type="term" value="P:rRNA processing"/>
    <property type="evidence" value="ECO:0007669"/>
    <property type="project" value="UniProtKB-KW"/>
</dbReference>
<dbReference type="InterPro" id="IPR000467">
    <property type="entry name" value="G_patch_dom"/>
</dbReference>
<dbReference type="InterPro" id="IPR050656">
    <property type="entry name" value="PINX1"/>
</dbReference>
<dbReference type="PANTHER" id="PTHR23149">
    <property type="entry name" value="G PATCH DOMAIN CONTAINING PROTEIN"/>
    <property type="match status" value="1"/>
</dbReference>
<dbReference type="PANTHER" id="PTHR23149:SF9">
    <property type="entry name" value="G PATCH DOMAIN-CONTAINING PROTEIN 4"/>
    <property type="match status" value="1"/>
</dbReference>
<dbReference type="Pfam" id="PF01585">
    <property type="entry name" value="G-patch"/>
    <property type="match status" value="1"/>
</dbReference>
<dbReference type="SMART" id="SM00443">
    <property type="entry name" value="G_patch"/>
    <property type="match status" value="1"/>
</dbReference>
<dbReference type="PROSITE" id="PS50174">
    <property type="entry name" value="G_PATCH"/>
    <property type="match status" value="1"/>
</dbReference>
<keyword id="KW-0539">Nucleus</keyword>
<keyword id="KW-1185">Reference proteome</keyword>
<keyword id="KW-0690">Ribosome biogenesis</keyword>
<keyword id="KW-0698">rRNA processing</keyword>
<comment type="function">
    <text evidence="4">Involved in ribosome biogenesis, required for normal progression of rRNA processing (PubMed:29375609). Seems to promote cell proliferation in leaves (PubMed:29375609).</text>
</comment>
<comment type="subcellular location">
    <subcellularLocation>
        <location evidence="2">Nucleus</location>
    </subcellularLocation>
    <subcellularLocation>
        <location evidence="4">Nucleus</location>
        <location evidence="4">Nucleolus</location>
    </subcellularLocation>
</comment>
<comment type="tissue specificity">
    <text evidence="4">Strongly expressed in tissues with high cell proliferation activity that have a high demand for ribosome production such as shoot tips, leaves primordia, root tips and floral buds.</text>
</comment>
<comment type="disruption phenotype">
    <text evidence="4">Reduced leaf cell number associated with pointed leaves shape (PubMed:29375609). Defects in pre-rRNA processing characterized by an increased accumulation of rRNA intermediates containing 50-ETS, ITS1, or ITS2 (PubMed:29375609). Higher levels of 35S, 27SA, 27SB, P-A3, and 18SA3 rRNAs (PubMed:29375609). The double mutant gdp1 oli2 exhibit strong growth defect due to a synergistically impaired cell proliferation in leaves and enlarged cells (PubMed:29375609).</text>
</comment>
<comment type="sequence caution" evidence="6">
    <conflict type="erroneous gene model prediction">
        <sequence resource="EMBL-CDS" id="AAF24571"/>
    </conflict>
</comment>
<feature type="chain" id="PRO_0000448883" description="G-patch domain-containing protein 1">
    <location>
        <begin position="1"/>
        <end position="391"/>
    </location>
</feature>
<feature type="domain" description="G-patch" evidence="1">
    <location>
        <begin position="15"/>
        <end position="61"/>
    </location>
</feature>
<feature type="region of interest" description="Disordered" evidence="3">
    <location>
        <begin position="80"/>
        <end position="132"/>
    </location>
</feature>
<feature type="region of interest" description="Disordered" evidence="3">
    <location>
        <begin position="212"/>
        <end position="307"/>
    </location>
</feature>
<feature type="short sequence motif" description="Nuclear localization signal" evidence="2">
    <location>
        <begin position="305"/>
        <end position="312"/>
    </location>
</feature>
<feature type="compositionally biased region" description="Acidic residues" evidence="3">
    <location>
        <begin position="92"/>
        <end position="102"/>
    </location>
</feature>
<feature type="compositionally biased region" description="Acidic residues" evidence="3">
    <location>
        <begin position="265"/>
        <end position="295"/>
    </location>
</feature>
<name>GPDP1_ARATH</name>